<keyword id="KW-0997">Cell inner membrane</keyword>
<keyword id="KW-1003">Cell membrane</keyword>
<keyword id="KW-0472">Membrane</keyword>
<keyword id="KW-1185">Reference proteome</keyword>
<keyword id="KW-0346">Stress response</keyword>
<keyword id="KW-0812">Transmembrane</keyword>
<keyword id="KW-1133">Transmembrane helix</keyword>
<organism>
    <name type="scientific">Escherichia coli (strain K12)</name>
    <dbReference type="NCBI Taxonomy" id="83333"/>
    <lineage>
        <taxon>Bacteria</taxon>
        <taxon>Pseudomonadati</taxon>
        <taxon>Pseudomonadota</taxon>
        <taxon>Gammaproteobacteria</taxon>
        <taxon>Enterobacterales</taxon>
        <taxon>Enterobacteriaceae</taxon>
        <taxon>Escherichia</taxon>
    </lineage>
</organism>
<comment type="subcellular location">
    <subcellularLocation>
        <location evidence="4">Cell inner membrane</location>
        <topology evidence="4">Single-pass membrane protein</topology>
    </subcellularLocation>
</comment>
<comment type="induction">
    <text evidence="2 3">Constitutively expressed (PubMed:19121005), repressed in minimal glucose medium, by SDS/EDTA (envelope stress), at 10 degrees Celsius and H(2)O(2), induced in minimal glycerol medium, by thiol oxidant diamide, strongly induced at 45 degrees Celsius (PubMed:19734316) (at protein level). Transcription is dependent on CRP.</text>
</comment>
<gene>
    <name type="primary">ykgR</name>
    <name type="ordered locus">b4671</name>
    <name type="ordered locus">JW5035.1</name>
</gene>
<feature type="chain" id="PRO_0000381980" description="Uncharacterized membrane protein YkgR">
    <location>
        <begin position="1"/>
        <end position="33"/>
    </location>
</feature>
<feature type="topological domain" description="Cytoplasmic" evidence="4">
    <location>
        <begin position="1"/>
        <end position="12"/>
    </location>
</feature>
<feature type="transmembrane region" description="Helical" evidence="1">
    <location>
        <begin position="13"/>
        <end position="33"/>
    </location>
</feature>
<protein>
    <recommendedName>
        <fullName>Uncharacterized membrane protein YkgR</fullName>
    </recommendedName>
</protein>
<proteinExistence type="evidence at protein level"/>
<reference key="1">
    <citation type="journal article" date="1997" name="Science">
        <title>The complete genome sequence of Escherichia coli K-12.</title>
        <authorList>
            <person name="Blattner F.R."/>
            <person name="Plunkett G. III"/>
            <person name="Bloch C.A."/>
            <person name="Perna N.T."/>
            <person name="Burland V."/>
            <person name="Riley M."/>
            <person name="Collado-Vides J."/>
            <person name="Glasner J.D."/>
            <person name="Rode C.K."/>
            <person name="Mayhew G.F."/>
            <person name="Gregor J."/>
            <person name="Davis N.W."/>
            <person name="Kirkpatrick H.A."/>
            <person name="Goeden M.A."/>
            <person name="Rose D.J."/>
            <person name="Mau B."/>
            <person name="Shao Y."/>
        </authorList>
    </citation>
    <scope>NUCLEOTIDE SEQUENCE [LARGE SCALE GENOMIC DNA]</scope>
    <source>
        <strain>K12 / MG1655 / ATCC 47076</strain>
    </source>
</reference>
<reference key="2">
    <citation type="journal article" date="2006" name="Mol. Syst. Biol.">
        <title>Highly accurate genome sequences of Escherichia coli K-12 strains MG1655 and W3110.</title>
        <authorList>
            <person name="Hayashi K."/>
            <person name="Morooka N."/>
            <person name="Yamamoto Y."/>
            <person name="Fujita K."/>
            <person name="Isono K."/>
            <person name="Choi S."/>
            <person name="Ohtsubo E."/>
            <person name="Baba T."/>
            <person name="Wanner B.L."/>
            <person name="Mori H."/>
            <person name="Horiuchi T."/>
        </authorList>
    </citation>
    <scope>NUCLEOTIDE SEQUENCE [LARGE SCALE GENOMIC DNA]</scope>
    <source>
        <strain>K12 / W3110 / ATCC 27325 / DSM 5911</strain>
    </source>
</reference>
<reference key="3">
    <citation type="journal article" date="2008" name="Mol. Microbiol.">
        <title>Small membrane proteins found by comparative genomics and ribosome binding site models.</title>
        <authorList>
            <person name="Hemm M.R."/>
            <person name="Paul B.J."/>
            <person name="Schneider T.D."/>
            <person name="Storz G."/>
            <person name="Rudd K.E."/>
        </authorList>
    </citation>
    <scope>IDENTIFICATION</scope>
    <scope>INDUCTION</scope>
    <source>
        <strain>K12 / MG1655 / ATCC 47076</strain>
    </source>
</reference>
<reference key="4">
    <citation type="journal article" date="2010" name="J. Bacteriol.">
        <title>Small stress response proteins in Escherichia coli: proteins missed by classical proteomic studies.</title>
        <authorList>
            <person name="Hemm M.R."/>
            <person name="Paul B.J."/>
            <person name="Miranda-Rios J."/>
            <person name="Zhang A."/>
            <person name="Soltanzad N."/>
            <person name="Storz G."/>
        </authorList>
    </citation>
    <scope>INDUCTION</scope>
    <source>
        <strain>K12 / MG1655 / ATCC 47076</strain>
    </source>
</reference>
<reference key="5">
    <citation type="journal article" date="2011" name="J. Biol. Chem.">
        <title>Membrane localization of small proteins in Escherichia coli.</title>
        <authorList>
            <person name="Fontaine F."/>
            <person name="Fuchs R.T."/>
            <person name="Storz G."/>
        </authorList>
    </citation>
    <scope>SUBCELLULAR LOCATION</scope>
    <scope>TOPOLOGY</scope>
    <source>
        <strain>K12 / MG1655 / ATCC 47076</strain>
    </source>
</reference>
<evidence type="ECO:0000255" key="1"/>
<evidence type="ECO:0000269" key="2">
    <source>
    </source>
</evidence>
<evidence type="ECO:0000269" key="3">
    <source>
    </source>
</evidence>
<evidence type="ECO:0000305" key="4">
    <source>
    </source>
</evidence>
<dbReference type="EMBL" id="U00096">
    <property type="protein sequence ID" value="ACO59990.1"/>
    <property type="molecule type" value="Genomic_DNA"/>
</dbReference>
<dbReference type="EMBL" id="AP009048">
    <property type="status" value="NOT_ANNOTATED_CDS"/>
    <property type="molecule type" value="Genomic_DNA"/>
</dbReference>
<dbReference type="RefSeq" id="WP_000662258.1">
    <property type="nucleotide sequence ID" value="NZ_STEB01000020.1"/>
</dbReference>
<dbReference type="RefSeq" id="YP_002791238.1">
    <property type="nucleotide sequence ID" value="NC_000913.3"/>
</dbReference>
<dbReference type="SMR" id="C1P5Z8"/>
<dbReference type="FunCoup" id="C1P5Z8">
    <property type="interactions" value="1"/>
</dbReference>
<dbReference type="STRING" id="511145.b4671"/>
<dbReference type="PaxDb" id="511145-b4671"/>
<dbReference type="EnsemblBacteria" id="ACO59990">
    <property type="protein sequence ID" value="ACO59990"/>
    <property type="gene ID" value="b4671"/>
</dbReference>
<dbReference type="GeneID" id="75204615"/>
<dbReference type="GeneID" id="7751635"/>
<dbReference type="KEGG" id="eco:b4671"/>
<dbReference type="KEGG" id="ecoc:C3026_01455"/>
<dbReference type="KEGG" id="ecoc:C3026_24085"/>
<dbReference type="PATRIC" id="fig|511145.12.peg.303"/>
<dbReference type="InParanoid" id="C1P5Z8"/>
<dbReference type="OrthoDB" id="6572259at2"/>
<dbReference type="BioCyc" id="EcoCyc:MONOMER0-2881"/>
<dbReference type="PRO" id="PR:C1P5Z8"/>
<dbReference type="Proteomes" id="UP000000625">
    <property type="component" value="Chromosome"/>
</dbReference>
<dbReference type="GO" id="GO:0005886">
    <property type="term" value="C:plasma membrane"/>
    <property type="evidence" value="ECO:0000314"/>
    <property type="project" value="EcoCyc"/>
</dbReference>
<dbReference type="InterPro" id="IPR048190">
    <property type="entry name" value="YkgR-like"/>
</dbReference>
<dbReference type="NCBIfam" id="NF041474">
    <property type="entry name" value="membrane_YkgR"/>
    <property type="match status" value="1"/>
</dbReference>
<sequence length="33" mass="3999">MKENKVQQISHKLINIVVFVAIVEYAYLFLHFY</sequence>
<accession>C1P5Z8</accession>
<name>YKGR_ECOLI</name>